<name>TREA_SALPC</name>
<sequence length="570" mass="63531">MIPPEIRRSVLLQKAIKLALAGTLLTFASFSATAADPSSDTETPQPPDILLGALFNDVQNAKLFPDQKTFADAIPNSDPLMILADYRMQRNQSGFDLRHFVDVNFTLPKAGEKYVPPAGQSLREHIDGLWPVLTRSTKNVKKWDSLLPLPESYVVPGGRFREIYYWDSYFTMLGLAESGHWDKVADMVANFGYEIDAWGHIPNGNRTYYLSHSQPPFFAFMVELLAQHEGDDALKEYLPQLQKEYAYWMEGVETLQPGQQNQRVVKLEDGSVLNRYWDDRDTPRPESWVEDIATAKSNPNRPATEIYRDLRSAAASGWDFSSRWMDNPQQLSTIRTTTIVPVDLNALLYQLEKTLARASAAAGDRAKASQYDALANARQKAIEMHLWNNKEGWYADYDLQNNKIRDQLTAAALFPLYVNAAAKDRAAKVAAAAQAHLLQPGGLATTSVKSGQQWDAPNGWAPLQWVAAEGLQNYGQDDVAMEVTWRFLTNVQHTYDREKKLVEKYDVSSTGTGGGGGEYPLQDGFGWTNGVTLKMLDLICPQEKPCDSVPSTRPASLSATPTKTPSAATQ</sequence>
<organism>
    <name type="scientific">Salmonella paratyphi C (strain RKS4594)</name>
    <dbReference type="NCBI Taxonomy" id="476213"/>
    <lineage>
        <taxon>Bacteria</taxon>
        <taxon>Pseudomonadati</taxon>
        <taxon>Pseudomonadota</taxon>
        <taxon>Gammaproteobacteria</taxon>
        <taxon>Enterobacterales</taxon>
        <taxon>Enterobacteriaceae</taxon>
        <taxon>Salmonella</taxon>
    </lineage>
</organism>
<feature type="signal peptide" evidence="1">
    <location>
        <begin position="1"/>
        <end position="34"/>
    </location>
</feature>
<feature type="chain" id="PRO_1000149685" description="Periplasmic trehalase">
    <location>
        <begin position="35"/>
        <end position="570"/>
    </location>
</feature>
<feature type="region of interest" description="Disordered" evidence="2">
    <location>
        <begin position="544"/>
        <end position="570"/>
    </location>
</feature>
<feature type="compositionally biased region" description="Low complexity" evidence="2">
    <location>
        <begin position="554"/>
        <end position="570"/>
    </location>
</feature>
<feature type="active site" description="Proton donor/acceptor" evidence="1">
    <location>
        <position position="319"/>
    </location>
</feature>
<feature type="active site" description="Proton donor/acceptor" evidence="1">
    <location>
        <position position="503"/>
    </location>
</feature>
<feature type="binding site" evidence="1">
    <location>
        <position position="159"/>
    </location>
    <ligand>
        <name>substrate</name>
    </ligand>
</feature>
<feature type="binding site" evidence="1">
    <location>
        <begin position="166"/>
        <end position="167"/>
    </location>
    <ligand>
        <name>substrate</name>
    </ligand>
</feature>
<feature type="binding site" evidence="1">
    <location>
        <position position="203"/>
    </location>
    <ligand>
        <name>substrate</name>
    </ligand>
</feature>
<feature type="binding site" evidence="1">
    <location>
        <begin position="212"/>
        <end position="214"/>
    </location>
    <ligand>
        <name>substrate</name>
    </ligand>
</feature>
<feature type="binding site" evidence="1">
    <location>
        <begin position="284"/>
        <end position="286"/>
    </location>
    <ligand>
        <name>substrate</name>
    </ligand>
</feature>
<feature type="binding site" evidence="1">
    <location>
        <position position="317"/>
    </location>
    <ligand>
        <name>substrate</name>
    </ligand>
</feature>
<feature type="binding site" evidence="1">
    <location>
        <position position="518"/>
    </location>
    <ligand>
        <name>substrate</name>
    </ligand>
</feature>
<proteinExistence type="inferred from homology"/>
<accession>C0Q337</accession>
<evidence type="ECO:0000255" key="1">
    <source>
        <dbReference type="HAMAP-Rule" id="MF_01060"/>
    </source>
</evidence>
<evidence type="ECO:0000256" key="2">
    <source>
        <dbReference type="SAM" id="MobiDB-lite"/>
    </source>
</evidence>
<keyword id="KW-0326">Glycosidase</keyword>
<keyword id="KW-0378">Hydrolase</keyword>
<keyword id="KW-0574">Periplasm</keyword>
<keyword id="KW-0732">Signal</keyword>
<comment type="function">
    <text evidence="1">Provides the cells with the ability to utilize trehalose at high osmolarity by splitting it into glucose molecules that can subsequently be taken up by the phosphotransferase-mediated uptake system.</text>
</comment>
<comment type="catalytic activity">
    <reaction evidence="1">
        <text>alpha,alpha-trehalose + H2O = alpha-D-glucose + beta-D-glucose</text>
        <dbReference type="Rhea" id="RHEA:32675"/>
        <dbReference type="ChEBI" id="CHEBI:15377"/>
        <dbReference type="ChEBI" id="CHEBI:15903"/>
        <dbReference type="ChEBI" id="CHEBI:16551"/>
        <dbReference type="ChEBI" id="CHEBI:17925"/>
        <dbReference type="EC" id="3.2.1.28"/>
    </reaction>
</comment>
<comment type="subunit">
    <text evidence="1">Monomer.</text>
</comment>
<comment type="subcellular location">
    <subcellularLocation>
        <location evidence="1">Periplasm</location>
    </subcellularLocation>
</comment>
<comment type="similarity">
    <text evidence="1">Belongs to the glycosyl hydrolase 37 family.</text>
</comment>
<gene>
    <name evidence="1" type="primary">treA</name>
    <name type="ordered locus">SPC_1933</name>
</gene>
<reference key="1">
    <citation type="journal article" date="2009" name="PLoS ONE">
        <title>Salmonella paratyphi C: genetic divergence from Salmonella choleraesuis and pathogenic convergence with Salmonella typhi.</title>
        <authorList>
            <person name="Liu W.-Q."/>
            <person name="Feng Y."/>
            <person name="Wang Y."/>
            <person name="Zou Q.-H."/>
            <person name="Chen F."/>
            <person name="Guo J.-T."/>
            <person name="Peng Y.-H."/>
            <person name="Jin Y."/>
            <person name="Li Y.-G."/>
            <person name="Hu S.-N."/>
            <person name="Johnston R.N."/>
            <person name="Liu G.-R."/>
            <person name="Liu S.-L."/>
        </authorList>
    </citation>
    <scope>NUCLEOTIDE SEQUENCE [LARGE SCALE GENOMIC DNA]</scope>
    <source>
        <strain>RKS4594</strain>
    </source>
</reference>
<dbReference type="EC" id="3.2.1.28" evidence="1"/>
<dbReference type="EMBL" id="CP000857">
    <property type="protein sequence ID" value="ACN46069.1"/>
    <property type="molecule type" value="Genomic_DNA"/>
</dbReference>
<dbReference type="RefSeq" id="WP_000612812.1">
    <property type="nucleotide sequence ID" value="NC_012125.1"/>
</dbReference>
<dbReference type="SMR" id="C0Q337"/>
<dbReference type="CAZy" id="GH37">
    <property type="family name" value="Glycoside Hydrolase Family 37"/>
</dbReference>
<dbReference type="KEGG" id="sei:SPC_1933"/>
<dbReference type="HOGENOM" id="CLU_006451_3_1_6"/>
<dbReference type="Proteomes" id="UP000001599">
    <property type="component" value="Chromosome"/>
</dbReference>
<dbReference type="GO" id="GO:0042597">
    <property type="term" value="C:periplasmic space"/>
    <property type="evidence" value="ECO:0007669"/>
    <property type="project" value="UniProtKB-SubCell"/>
</dbReference>
<dbReference type="GO" id="GO:0004555">
    <property type="term" value="F:alpha,alpha-trehalase activity"/>
    <property type="evidence" value="ECO:0007669"/>
    <property type="project" value="UniProtKB-UniRule"/>
</dbReference>
<dbReference type="GO" id="GO:0071474">
    <property type="term" value="P:cellular hyperosmotic response"/>
    <property type="evidence" value="ECO:0007669"/>
    <property type="project" value="InterPro"/>
</dbReference>
<dbReference type="GO" id="GO:0005993">
    <property type="term" value="P:trehalose catabolic process"/>
    <property type="evidence" value="ECO:0007669"/>
    <property type="project" value="InterPro"/>
</dbReference>
<dbReference type="FunFam" id="1.50.10.10:FF:000003">
    <property type="entry name" value="Cytoplasmic trehalase"/>
    <property type="match status" value="1"/>
</dbReference>
<dbReference type="Gene3D" id="1.50.10.10">
    <property type="match status" value="1"/>
</dbReference>
<dbReference type="HAMAP" id="MF_01060">
    <property type="entry name" value="Peripl_trehalase"/>
    <property type="match status" value="1"/>
</dbReference>
<dbReference type="InterPro" id="IPR008928">
    <property type="entry name" value="6-hairpin_glycosidase_sf"/>
</dbReference>
<dbReference type="InterPro" id="IPR012341">
    <property type="entry name" value="6hp_glycosidase-like_sf"/>
</dbReference>
<dbReference type="InterPro" id="IPR001661">
    <property type="entry name" value="Glyco_hydro_37"/>
</dbReference>
<dbReference type="InterPro" id="IPR018232">
    <property type="entry name" value="Glyco_hydro_37_CS"/>
</dbReference>
<dbReference type="InterPro" id="IPR023720">
    <property type="entry name" value="Trehalase_periplasmic"/>
</dbReference>
<dbReference type="NCBIfam" id="NF009773">
    <property type="entry name" value="PRK13270.1"/>
    <property type="match status" value="1"/>
</dbReference>
<dbReference type="NCBIfam" id="NF009774">
    <property type="entry name" value="PRK13271.1"/>
    <property type="match status" value="1"/>
</dbReference>
<dbReference type="PANTHER" id="PTHR23403">
    <property type="entry name" value="TREHALASE"/>
    <property type="match status" value="1"/>
</dbReference>
<dbReference type="PANTHER" id="PTHR23403:SF1">
    <property type="entry name" value="TREHALASE"/>
    <property type="match status" value="1"/>
</dbReference>
<dbReference type="Pfam" id="PF01204">
    <property type="entry name" value="Trehalase"/>
    <property type="match status" value="1"/>
</dbReference>
<dbReference type="PRINTS" id="PR00744">
    <property type="entry name" value="GLHYDRLASE37"/>
</dbReference>
<dbReference type="SUPFAM" id="SSF48208">
    <property type="entry name" value="Six-hairpin glycosidases"/>
    <property type="match status" value="1"/>
</dbReference>
<dbReference type="PROSITE" id="PS00927">
    <property type="entry name" value="TREHALASE_1"/>
    <property type="match status" value="1"/>
</dbReference>
<dbReference type="PROSITE" id="PS00928">
    <property type="entry name" value="TREHALASE_2"/>
    <property type="match status" value="1"/>
</dbReference>
<protein>
    <recommendedName>
        <fullName evidence="1">Periplasmic trehalase</fullName>
        <ecNumber evidence="1">3.2.1.28</ecNumber>
    </recommendedName>
    <alternativeName>
        <fullName evidence="1">Alpha,alpha-trehalase</fullName>
    </alternativeName>
    <alternativeName>
        <fullName evidence="1">Alpha,alpha-trehalose glucohydrolase</fullName>
    </alternativeName>
</protein>